<proteinExistence type="inferred from homology"/>
<evidence type="ECO:0000250" key="1"/>
<evidence type="ECO:0000255" key="2"/>
<evidence type="ECO:0000305" key="3"/>
<reference key="1">
    <citation type="journal article" date="2002" name="Nucleic Acids Res.">
        <title>Genome sequence of Shigella flexneri 2a: insights into pathogenicity through comparison with genomes of Escherichia coli K12 and O157.</title>
        <authorList>
            <person name="Jin Q."/>
            <person name="Yuan Z."/>
            <person name="Xu J."/>
            <person name="Wang Y."/>
            <person name="Shen Y."/>
            <person name="Lu W."/>
            <person name="Wang J."/>
            <person name="Liu H."/>
            <person name="Yang J."/>
            <person name="Yang F."/>
            <person name="Zhang X."/>
            <person name="Zhang J."/>
            <person name="Yang G."/>
            <person name="Wu H."/>
            <person name="Qu D."/>
            <person name="Dong J."/>
            <person name="Sun L."/>
            <person name="Xue Y."/>
            <person name="Zhao A."/>
            <person name="Gao Y."/>
            <person name="Zhu J."/>
            <person name="Kan B."/>
            <person name="Ding K."/>
            <person name="Chen S."/>
            <person name="Cheng H."/>
            <person name="Yao Z."/>
            <person name="He B."/>
            <person name="Chen R."/>
            <person name="Ma D."/>
            <person name="Qiang B."/>
            <person name="Wen Y."/>
            <person name="Hou Y."/>
            <person name="Yu J."/>
        </authorList>
    </citation>
    <scope>NUCLEOTIDE SEQUENCE [LARGE SCALE GENOMIC DNA]</scope>
    <source>
        <strain>301 / Serotype 2a</strain>
    </source>
</reference>
<reference key="2">
    <citation type="journal article" date="2003" name="Infect. Immun.">
        <title>Complete genome sequence and comparative genomics of Shigella flexneri serotype 2a strain 2457T.</title>
        <authorList>
            <person name="Wei J."/>
            <person name="Goldberg M.B."/>
            <person name="Burland V."/>
            <person name="Venkatesan M.M."/>
            <person name="Deng W."/>
            <person name="Fournier G."/>
            <person name="Mayhew G.F."/>
            <person name="Plunkett G. III"/>
            <person name="Rose D.J."/>
            <person name="Darling A."/>
            <person name="Mau B."/>
            <person name="Perna N.T."/>
            <person name="Payne S.M."/>
            <person name="Runyen-Janecky L.J."/>
            <person name="Zhou S."/>
            <person name="Schwartz D.C."/>
            <person name="Blattner F.R."/>
        </authorList>
    </citation>
    <scope>NUCLEOTIDE SEQUENCE [LARGE SCALE GENOMIC DNA]</scope>
    <source>
        <strain>ATCC 700930 / 2457T / Serotype 2a</strain>
    </source>
</reference>
<organism>
    <name type="scientific">Shigella flexneri</name>
    <dbReference type="NCBI Taxonomy" id="623"/>
    <lineage>
        <taxon>Bacteria</taxon>
        <taxon>Pseudomonadati</taxon>
        <taxon>Pseudomonadota</taxon>
        <taxon>Gammaproteobacteria</taxon>
        <taxon>Enterobacterales</taxon>
        <taxon>Enterobacteriaceae</taxon>
        <taxon>Shigella</taxon>
    </lineage>
</organism>
<gene>
    <name type="primary">efeO</name>
    <name type="ordered locus">SF1020</name>
    <name type="ordered locus">S1090</name>
</gene>
<accession>P0AB25</accession>
<accession>P75902</accession>
<accession>Q9R2S4</accession>
<dbReference type="EMBL" id="AE005674">
    <property type="protein sequence ID" value="AAN42646.1"/>
    <property type="molecule type" value="Genomic_DNA"/>
</dbReference>
<dbReference type="EMBL" id="AE014073">
    <property type="protein sequence ID" value="AAP16531.1"/>
    <property type="molecule type" value="Genomic_DNA"/>
</dbReference>
<dbReference type="RefSeq" id="WP_000154398.1">
    <property type="nucleotide sequence ID" value="NZ_WPGW01000205.1"/>
</dbReference>
<dbReference type="SMR" id="P0AB25"/>
<dbReference type="STRING" id="198214.SF1020"/>
<dbReference type="PaxDb" id="198214-SF1020"/>
<dbReference type="GeneID" id="93776391"/>
<dbReference type="KEGG" id="sfl:SF1020"/>
<dbReference type="KEGG" id="sfx:S1090"/>
<dbReference type="PATRIC" id="fig|198214.7.peg.1184"/>
<dbReference type="HOGENOM" id="CLU_050342_2_1_6"/>
<dbReference type="Proteomes" id="UP000001006">
    <property type="component" value="Chromosome"/>
</dbReference>
<dbReference type="Proteomes" id="UP000002673">
    <property type="component" value="Chromosome"/>
</dbReference>
<dbReference type="GO" id="GO:0042597">
    <property type="term" value="C:periplasmic space"/>
    <property type="evidence" value="ECO:0007669"/>
    <property type="project" value="UniProtKB-SubCell"/>
</dbReference>
<dbReference type="CDD" id="cd14656">
    <property type="entry name" value="Imelysin-like_EfeO"/>
    <property type="match status" value="1"/>
</dbReference>
<dbReference type="FunFam" id="1.20.1420.20:FF:000001">
    <property type="entry name" value="Iron uptake system component EfeO"/>
    <property type="match status" value="1"/>
</dbReference>
<dbReference type="FunFam" id="2.60.40.420:FF:000052">
    <property type="entry name" value="Iron uptake system component EfeO"/>
    <property type="match status" value="1"/>
</dbReference>
<dbReference type="Gene3D" id="2.60.40.420">
    <property type="entry name" value="Cupredoxins - blue copper proteins"/>
    <property type="match status" value="1"/>
</dbReference>
<dbReference type="Gene3D" id="1.20.1420.20">
    <property type="entry name" value="M75 peptidase, HXXE motif"/>
    <property type="match status" value="1"/>
</dbReference>
<dbReference type="InterPro" id="IPR008972">
    <property type="entry name" value="Cupredoxin"/>
</dbReference>
<dbReference type="InterPro" id="IPR050894">
    <property type="entry name" value="EfeM/EfeO_iron_uptake"/>
</dbReference>
<dbReference type="InterPro" id="IPR028096">
    <property type="entry name" value="EfeO_Cupredoxin"/>
</dbReference>
<dbReference type="InterPro" id="IPR018976">
    <property type="entry name" value="Imelysin-like"/>
</dbReference>
<dbReference type="InterPro" id="IPR034981">
    <property type="entry name" value="Imelysin-like_EfeO/Algp7"/>
</dbReference>
<dbReference type="InterPro" id="IPR038352">
    <property type="entry name" value="Imelysin_sf"/>
</dbReference>
<dbReference type="InterPro" id="IPR053377">
    <property type="entry name" value="Iron_uptake_EfeM/EfeO"/>
</dbReference>
<dbReference type="NCBIfam" id="NF041757">
    <property type="entry name" value="EfeO"/>
    <property type="match status" value="1"/>
</dbReference>
<dbReference type="NCBIfam" id="NF007697">
    <property type="entry name" value="PRK10378.1"/>
    <property type="match status" value="1"/>
</dbReference>
<dbReference type="PANTHER" id="PTHR39192">
    <property type="entry name" value="IRON UPTAKE SYSTEM COMPONENT EFEO"/>
    <property type="match status" value="1"/>
</dbReference>
<dbReference type="PANTHER" id="PTHR39192:SF1">
    <property type="entry name" value="IRON UPTAKE SYSTEM COMPONENT EFEO"/>
    <property type="match status" value="1"/>
</dbReference>
<dbReference type="Pfam" id="PF13473">
    <property type="entry name" value="Cupredoxin_1"/>
    <property type="match status" value="1"/>
</dbReference>
<dbReference type="Pfam" id="PF09375">
    <property type="entry name" value="Peptidase_M75"/>
    <property type="match status" value="1"/>
</dbReference>
<dbReference type="SUPFAM" id="SSF49503">
    <property type="entry name" value="Cupredoxins"/>
    <property type="match status" value="1"/>
</dbReference>
<keyword id="KW-0574">Periplasm</keyword>
<keyword id="KW-1185">Reference proteome</keyword>
<keyword id="KW-0732">Signal</keyword>
<protein>
    <recommendedName>
        <fullName>Iron uptake system component EfeO</fullName>
    </recommendedName>
</protein>
<sequence>MTINFRRNALQLSVAALFSSAFMANAADVPQVKVTVTDKQCEPMTITVNAGKTQFIIQNHSQKALEWEILKGVMVVEERENIAPGFSQKMTANLQPGEYDMTCGLLTNPKGKLIVKGEATADAAQSDALLSLGGAITAYKAYVMAETTQLVTDTKAFTDAIKAGDIEKAKALYAPTRQHYERIEPIAELFSDLDGSIDAREDDYEQKAADPKFTGFHRLEKALFGDNTTKGMDQYAEQLYTDVVDLQKRISELAFPPSKVVGGAAGLIEEVAASKISGEEDRYSHTDLWDFQANVEGSQKIVDLLRPQLQKANPELLAKVDANFKKVDTILAKYRTKDGFETYDKLTDADRNALKGPITALAEDLAQLRGVLGLD</sequence>
<comment type="function">
    <text evidence="1">Involved in Fe(2+) uptake. Could be an iron-binding and/or electron-transfer component (By similarity).</text>
</comment>
<comment type="subunit">
    <text evidence="1">Monomer. Part of a ferrous iron transporter composed of EfeU, EfeO and EfeB (By similarity).</text>
</comment>
<comment type="subcellular location">
    <subcellularLocation>
        <location evidence="1">Periplasm</location>
    </subcellularLocation>
</comment>
<comment type="similarity">
    <text evidence="3">Belongs to the EfeM/EfeO family.</text>
</comment>
<feature type="signal peptide" evidence="2">
    <location>
        <begin position="1"/>
        <end position="26"/>
    </location>
</feature>
<feature type="chain" id="PRO_0000168805" description="Iron uptake system component EfeO">
    <location>
        <begin position="27"/>
        <end position="375"/>
    </location>
</feature>
<name>EFEO_SHIFL</name>